<keyword id="KW-0963">Cytoplasm</keyword>
<keyword id="KW-0690">Ribosome biogenesis</keyword>
<feature type="chain" id="PRO_0000274887" description="Ribosome-binding factor A">
    <location>
        <begin position="1"/>
        <end position="123"/>
    </location>
</feature>
<reference key="1">
    <citation type="journal article" date="2006" name="PLoS Genet.">
        <title>Genome sequence of Rickettsia bellii illuminates the role of amoebae in gene exchanges between intracellular pathogens.</title>
        <authorList>
            <person name="Ogata H."/>
            <person name="La Scola B."/>
            <person name="Audic S."/>
            <person name="Renesto P."/>
            <person name="Blanc G."/>
            <person name="Robert C."/>
            <person name="Fournier P.-E."/>
            <person name="Claverie J.-M."/>
            <person name="Raoult D."/>
        </authorList>
    </citation>
    <scope>NUCLEOTIDE SEQUENCE [LARGE SCALE GENOMIC DNA]</scope>
    <source>
        <strain>RML369-C</strain>
    </source>
</reference>
<proteinExistence type="inferred from homology"/>
<accession>Q1RH48</accession>
<protein>
    <recommendedName>
        <fullName evidence="1">Ribosome-binding factor A</fullName>
    </recommendedName>
</protein>
<dbReference type="EMBL" id="CP000087">
    <property type="protein sequence ID" value="ABE05316.1"/>
    <property type="molecule type" value="Genomic_DNA"/>
</dbReference>
<dbReference type="RefSeq" id="WP_011477891.1">
    <property type="nucleotide sequence ID" value="NC_007940.1"/>
</dbReference>
<dbReference type="SMR" id="Q1RH48"/>
<dbReference type="KEGG" id="rbe:RBE_1235"/>
<dbReference type="eggNOG" id="COG0858">
    <property type="taxonomic scope" value="Bacteria"/>
</dbReference>
<dbReference type="HOGENOM" id="CLU_089475_1_0_5"/>
<dbReference type="OrthoDB" id="9805051at2"/>
<dbReference type="Proteomes" id="UP000001951">
    <property type="component" value="Chromosome"/>
</dbReference>
<dbReference type="GO" id="GO:0005829">
    <property type="term" value="C:cytosol"/>
    <property type="evidence" value="ECO:0007669"/>
    <property type="project" value="TreeGrafter"/>
</dbReference>
<dbReference type="GO" id="GO:0043024">
    <property type="term" value="F:ribosomal small subunit binding"/>
    <property type="evidence" value="ECO:0007669"/>
    <property type="project" value="TreeGrafter"/>
</dbReference>
<dbReference type="GO" id="GO:0030490">
    <property type="term" value="P:maturation of SSU-rRNA"/>
    <property type="evidence" value="ECO:0007669"/>
    <property type="project" value="UniProtKB-UniRule"/>
</dbReference>
<dbReference type="Gene3D" id="3.30.300.20">
    <property type="match status" value="1"/>
</dbReference>
<dbReference type="HAMAP" id="MF_00003">
    <property type="entry name" value="RbfA"/>
    <property type="match status" value="1"/>
</dbReference>
<dbReference type="InterPro" id="IPR015946">
    <property type="entry name" value="KH_dom-like_a/b"/>
</dbReference>
<dbReference type="InterPro" id="IPR000238">
    <property type="entry name" value="RbfA"/>
</dbReference>
<dbReference type="InterPro" id="IPR023799">
    <property type="entry name" value="RbfA_dom_sf"/>
</dbReference>
<dbReference type="InterPro" id="IPR020053">
    <property type="entry name" value="Ribosome-bd_factorA_CS"/>
</dbReference>
<dbReference type="NCBIfam" id="NF001799">
    <property type="entry name" value="PRK00521.2-2"/>
    <property type="match status" value="1"/>
</dbReference>
<dbReference type="NCBIfam" id="TIGR00082">
    <property type="entry name" value="rbfA"/>
    <property type="match status" value="1"/>
</dbReference>
<dbReference type="PANTHER" id="PTHR33515">
    <property type="entry name" value="RIBOSOME-BINDING FACTOR A, CHLOROPLASTIC-RELATED"/>
    <property type="match status" value="1"/>
</dbReference>
<dbReference type="PANTHER" id="PTHR33515:SF1">
    <property type="entry name" value="RIBOSOME-BINDING FACTOR A, CHLOROPLASTIC-RELATED"/>
    <property type="match status" value="1"/>
</dbReference>
<dbReference type="Pfam" id="PF02033">
    <property type="entry name" value="RBFA"/>
    <property type="match status" value="1"/>
</dbReference>
<dbReference type="SUPFAM" id="SSF89919">
    <property type="entry name" value="Ribosome-binding factor A, RbfA"/>
    <property type="match status" value="1"/>
</dbReference>
<dbReference type="PROSITE" id="PS01319">
    <property type="entry name" value="RBFA"/>
    <property type="match status" value="1"/>
</dbReference>
<name>RBFA_RICBR</name>
<sequence length="123" mass="14190">MKKLTSENSHRQQKVASIINEALIEILHRGKMLDPRLYDCPLTITKIIVTADLKIANCYFLPFNTKLTPQEITESLNNSKNAIRNFVTGKINMKYSPDIRFHYDHGFDNALKVEQLLKDTNNI</sequence>
<organism>
    <name type="scientific">Rickettsia bellii (strain RML369-C)</name>
    <dbReference type="NCBI Taxonomy" id="336407"/>
    <lineage>
        <taxon>Bacteria</taxon>
        <taxon>Pseudomonadati</taxon>
        <taxon>Pseudomonadota</taxon>
        <taxon>Alphaproteobacteria</taxon>
        <taxon>Rickettsiales</taxon>
        <taxon>Rickettsiaceae</taxon>
        <taxon>Rickettsieae</taxon>
        <taxon>Rickettsia</taxon>
        <taxon>belli group</taxon>
    </lineage>
</organism>
<evidence type="ECO:0000255" key="1">
    <source>
        <dbReference type="HAMAP-Rule" id="MF_00003"/>
    </source>
</evidence>
<gene>
    <name evidence="1" type="primary">rbfA</name>
    <name type="ordered locus">RBE_1235</name>
</gene>
<comment type="function">
    <text evidence="1">One of several proteins that assist in the late maturation steps of the functional core of the 30S ribosomal subunit. Associates with free 30S ribosomal subunits (but not with 30S subunits that are part of 70S ribosomes or polysomes). Required for efficient processing of 16S rRNA. May interact with the 5'-terminal helix region of 16S rRNA.</text>
</comment>
<comment type="subunit">
    <text evidence="1">Monomer. Binds 30S ribosomal subunits, but not 50S ribosomal subunits or 70S ribosomes.</text>
</comment>
<comment type="subcellular location">
    <subcellularLocation>
        <location evidence="1">Cytoplasm</location>
    </subcellularLocation>
</comment>
<comment type="similarity">
    <text evidence="1">Belongs to the RbfA family.</text>
</comment>